<gene>
    <name evidence="1" type="primary">yacL</name>
    <name type="ordered locus">SNSL254_A0175</name>
</gene>
<reference key="1">
    <citation type="journal article" date="2011" name="J. Bacteriol.">
        <title>Comparative genomics of 28 Salmonella enterica isolates: evidence for CRISPR-mediated adaptive sublineage evolution.</title>
        <authorList>
            <person name="Fricke W.F."/>
            <person name="Mammel M.K."/>
            <person name="McDermott P.F."/>
            <person name="Tartera C."/>
            <person name="White D.G."/>
            <person name="Leclerc J.E."/>
            <person name="Ravel J."/>
            <person name="Cebula T.A."/>
        </authorList>
    </citation>
    <scope>NUCLEOTIDE SEQUENCE [LARGE SCALE GENOMIC DNA]</scope>
    <source>
        <strain>SL254</strain>
    </source>
</reference>
<organism>
    <name type="scientific">Salmonella newport (strain SL254)</name>
    <dbReference type="NCBI Taxonomy" id="423368"/>
    <lineage>
        <taxon>Bacteria</taxon>
        <taxon>Pseudomonadati</taxon>
        <taxon>Pseudomonadota</taxon>
        <taxon>Gammaproteobacteria</taxon>
        <taxon>Enterobacterales</taxon>
        <taxon>Enterobacteriaceae</taxon>
        <taxon>Salmonella</taxon>
    </lineage>
</organism>
<name>YACL_SALNS</name>
<sequence>MDYEFLRDVTGGVKVRMSMGHEVVGHWFNEEVKDNLSLLDEVEQAARTVKGSERSWQRAGHEYTIWMDGEEVMIRANQLDFSGDEMEEGMSYYDEESLSLCGMEDFLRVVAAYREFVSKA</sequence>
<evidence type="ECO:0000255" key="1">
    <source>
        <dbReference type="HAMAP-Rule" id="MF_01053"/>
    </source>
</evidence>
<comment type="similarity">
    <text evidence="1">Belongs to the UPF0231 family.</text>
</comment>
<accession>B4SU84</accession>
<proteinExistence type="inferred from homology"/>
<feature type="chain" id="PRO_1000136306" description="UPF0231 protein YacL">
    <location>
        <begin position="1"/>
        <end position="120"/>
    </location>
</feature>
<protein>
    <recommendedName>
        <fullName evidence="1">UPF0231 protein YacL</fullName>
    </recommendedName>
</protein>
<dbReference type="EMBL" id="CP001113">
    <property type="protein sequence ID" value="ACF62836.1"/>
    <property type="molecule type" value="Genomic_DNA"/>
</dbReference>
<dbReference type="RefSeq" id="WP_000384308.1">
    <property type="nucleotide sequence ID" value="NZ_CCMR01000003.1"/>
</dbReference>
<dbReference type="SMR" id="B4SU84"/>
<dbReference type="KEGG" id="see:SNSL254_A0175"/>
<dbReference type="HOGENOM" id="CLU_139226_0_0_6"/>
<dbReference type="Proteomes" id="UP000008824">
    <property type="component" value="Chromosome"/>
</dbReference>
<dbReference type="HAMAP" id="MF_01053">
    <property type="entry name" value="UPF0231"/>
    <property type="match status" value="1"/>
</dbReference>
<dbReference type="InterPro" id="IPR008249">
    <property type="entry name" value="UPF0231"/>
</dbReference>
<dbReference type="NCBIfam" id="NF003574">
    <property type="entry name" value="PRK05248.1-1"/>
    <property type="match status" value="1"/>
</dbReference>
<dbReference type="NCBIfam" id="NF003576">
    <property type="entry name" value="PRK05248.1-3"/>
    <property type="match status" value="1"/>
</dbReference>
<dbReference type="Pfam" id="PF06062">
    <property type="entry name" value="UPF0231"/>
    <property type="match status" value="1"/>
</dbReference>
<dbReference type="PIRSF" id="PIRSF006287">
    <property type="entry name" value="UCP006287"/>
    <property type="match status" value="1"/>
</dbReference>